<reference key="1">
    <citation type="journal article" date="2008" name="Genome Res.">
        <title>Comparative genome analysis of Salmonella enteritidis PT4 and Salmonella gallinarum 287/91 provides insights into evolutionary and host adaptation pathways.</title>
        <authorList>
            <person name="Thomson N.R."/>
            <person name="Clayton D.J."/>
            <person name="Windhorst D."/>
            <person name="Vernikos G."/>
            <person name="Davidson S."/>
            <person name="Churcher C."/>
            <person name="Quail M.A."/>
            <person name="Stevens M."/>
            <person name="Jones M.A."/>
            <person name="Watson M."/>
            <person name="Barron A."/>
            <person name="Layton A."/>
            <person name="Pickard D."/>
            <person name="Kingsley R.A."/>
            <person name="Bignell A."/>
            <person name="Clark L."/>
            <person name="Harris B."/>
            <person name="Ormond D."/>
            <person name="Abdellah Z."/>
            <person name="Brooks K."/>
            <person name="Cherevach I."/>
            <person name="Chillingworth T."/>
            <person name="Woodward J."/>
            <person name="Norberczak H."/>
            <person name="Lord A."/>
            <person name="Arrowsmith C."/>
            <person name="Jagels K."/>
            <person name="Moule S."/>
            <person name="Mungall K."/>
            <person name="Saunders M."/>
            <person name="Whitehead S."/>
            <person name="Chabalgoity J.A."/>
            <person name="Maskell D."/>
            <person name="Humphreys T."/>
            <person name="Roberts M."/>
            <person name="Barrow P.A."/>
            <person name="Dougan G."/>
            <person name="Parkhill J."/>
        </authorList>
    </citation>
    <scope>NUCLEOTIDE SEQUENCE [LARGE SCALE GENOMIC DNA]</scope>
    <source>
        <strain>287/91 / NCTC 13346</strain>
    </source>
</reference>
<proteinExistence type="inferred from homology"/>
<protein>
    <recommendedName>
        <fullName evidence="1">O-acetyl-ADP-ribose deacetylase</fullName>
        <ecNumber evidence="1">3.1.1.106</ecNumber>
    </recommendedName>
    <alternativeName>
        <fullName evidence="1">Regulator of RNase III activity</fullName>
    </alternativeName>
</protein>
<name>YMDB_SALG2</name>
<evidence type="ECO:0000255" key="1">
    <source>
        <dbReference type="HAMAP-Rule" id="MF_01205"/>
    </source>
</evidence>
<comment type="function">
    <text evidence="1">Deacetylates O-acetyl-ADP ribose to yield ADP-ribose and free acetate. Down-regulates ribonuclease 3 (RNase III) activity. Acts by interacting directly with the region of the ribonuclease that is required for dimerization/activation.</text>
</comment>
<comment type="catalytic activity">
    <reaction evidence="1">
        <text>3''-O-acetyl-ADP-D-ribose + H2O = ADP-D-ribose + acetate + H(+)</text>
        <dbReference type="Rhea" id="RHEA:59244"/>
        <dbReference type="ChEBI" id="CHEBI:15377"/>
        <dbReference type="ChEBI" id="CHEBI:15378"/>
        <dbReference type="ChEBI" id="CHEBI:30089"/>
        <dbReference type="ChEBI" id="CHEBI:57967"/>
        <dbReference type="ChEBI" id="CHEBI:142723"/>
        <dbReference type="EC" id="3.1.1.106"/>
    </reaction>
</comment>
<comment type="catalytic activity">
    <reaction evidence="1">
        <text>2''-O-acetyl-ADP-D-ribose + H2O = ADP-D-ribose + acetate + H(+)</text>
        <dbReference type="Rhea" id="RHEA:57060"/>
        <dbReference type="ChEBI" id="CHEBI:15377"/>
        <dbReference type="ChEBI" id="CHEBI:15378"/>
        <dbReference type="ChEBI" id="CHEBI:30089"/>
        <dbReference type="ChEBI" id="CHEBI:57967"/>
        <dbReference type="ChEBI" id="CHEBI:83767"/>
        <dbReference type="EC" id="3.1.1.106"/>
    </reaction>
</comment>
<comment type="subunit">
    <text evidence="1">Homodimer. Interacts with RNase III.</text>
</comment>
<comment type="similarity">
    <text evidence="1">Belongs to the MacroD-type family. YmdB subfamily.</text>
</comment>
<gene>
    <name evidence="1" type="primary">ymdB</name>
    <name type="ordered locus">SG1975</name>
</gene>
<accession>B5RBF3</accession>
<feature type="chain" id="PRO_0000409484" description="O-acetyl-ADP-ribose deacetylase">
    <location>
        <begin position="1"/>
        <end position="179"/>
    </location>
</feature>
<feature type="domain" description="Macro" evidence="1">
    <location>
        <begin position="1"/>
        <end position="175"/>
    </location>
</feature>
<feature type="active site" description="Proton acceptor" evidence="1">
    <location>
        <position position="35"/>
    </location>
</feature>
<feature type="binding site" evidence="1">
    <location>
        <begin position="11"/>
        <end position="12"/>
    </location>
    <ligand>
        <name>substrate</name>
    </ligand>
</feature>
<feature type="binding site" evidence="1">
    <location>
        <position position="25"/>
    </location>
    <ligand>
        <name>substrate</name>
    </ligand>
</feature>
<feature type="binding site" evidence="1">
    <location>
        <begin position="33"/>
        <end position="35"/>
    </location>
    <ligand>
        <name>substrate</name>
    </ligand>
</feature>
<feature type="binding site" evidence="1">
    <location>
        <begin position="122"/>
        <end position="126"/>
    </location>
    <ligand>
        <name>substrate</name>
    </ligand>
</feature>
<keyword id="KW-0378">Hydrolase</keyword>
<organism>
    <name type="scientific">Salmonella gallinarum (strain 287/91 / NCTC 13346)</name>
    <dbReference type="NCBI Taxonomy" id="550538"/>
    <lineage>
        <taxon>Bacteria</taxon>
        <taxon>Pseudomonadati</taxon>
        <taxon>Pseudomonadota</taxon>
        <taxon>Gammaproteobacteria</taxon>
        <taxon>Enterobacterales</taxon>
        <taxon>Enterobacteriaceae</taxon>
        <taxon>Salmonella</taxon>
    </lineage>
</organism>
<dbReference type="EC" id="3.1.1.106" evidence="1"/>
<dbReference type="EMBL" id="AM933173">
    <property type="protein sequence ID" value="CAR37825.1"/>
    <property type="molecule type" value="Genomic_DNA"/>
</dbReference>
<dbReference type="RefSeq" id="WP_000203945.1">
    <property type="nucleotide sequence ID" value="NC_011274.1"/>
</dbReference>
<dbReference type="SMR" id="B5RBF3"/>
<dbReference type="KEGG" id="seg:SG1975"/>
<dbReference type="HOGENOM" id="CLU_046550_5_1_6"/>
<dbReference type="Proteomes" id="UP000008321">
    <property type="component" value="Chromosome"/>
</dbReference>
<dbReference type="GO" id="GO:0061463">
    <property type="term" value="F:O-acetyl-ADP-ribose deacetylase activity"/>
    <property type="evidence" value="ECO:0007669"/>
    <property type="project" value="UniProtKB-EC"/>
</dbReference>
<dbReference type="GO" id="GO:0001883">
    <property type="term" value="F:purine nucleoside binding"/>
    <property type="evidence" value="ECO:0007669"/>
    <property type="project" value="UniProtKB-UniRule"/>
</dbReference>
<dbReference type="GO" id="GO:0008428">
    <property type="term" value="F:ribonuclease inhibitor activity"/>
    <property type="evidence" value="ECO:0007669"/>
    <property type="project" value="UniProtKB-UniRule"/>
</dbReference>
<dbReference type="GO" id="GO:0042278">
    <property type="term" value="P:purine nucleoside metabolic process"/>
    <property type="evidence" value="ECO:0007669"/>
    <property type="project" value="UniProtKB-UniRule"/>
</dbReference>
<dbReference type="CDD" id="cd02908">
    <property type="entry name" value="Macro_OAADPr_deacetylase"/>
    <property type="match status" value="1"/>
</dbReference>
<dbReference type="Gene3D" id="3.40.220.10">
    <property type="entry name" value="Leucine Aminopeptidase, subunit E, domain 1"/>
    <property type="match status" value="1"/>
</dbReference>
<dbReference type="HAMAP" id="MF_01205">
    <property type="entry name" value="YmdB"/>
    <property type="match status" value="1"/>
</dbReference>
<dbReference type="InterPro" id="IPR002589">
    <property type="entry name" value="Macro_dom"/>
</dbReference>
<dbReference type="InterPro" id="IPR043472">
    <property type="entry name" value="Macro_dom-like"/>
</dbReference>
<dbReference type="InterPro" id="IPR024900">
    <property type="entry name" value="O-Ac-ADP-ribose_deAcase"/>
</dbReference>
<dbReference type="NCBIfam" id="NF001660">
    <property type="entry name" value="PRK00431.1-1"/>
    <property type="match status" value="1"/>
</dbReference>
<dbReference type="NCBIfam" id="NF001664">
    <property type="entry name" value="PRK00431.1-6"/>
    <property type="match status" value="1"/>
</dbReference>
<dbReference type="PANTHER" id="PTHR11106">
    <property type="entry name" value="GANGLIOSIDE INDUCED DIFFERENTIATION ASSOCIATED PROTEIN 2-RELATED"/>
    <property type="match status" value="1"/>
</dbReference>
<dbReference type="PANTHER" id="PTHR11106:SF27">
    <property type="entry name" value="MACRO DOMAIN-CONTAINING PROTEIN"/>
    <property type="match status" value="1"/>
</dbReference>
<dbReference type="Pfam" id="PF01661">
    <property type="entry name" value="Macro"/>
    <property type="match status" value="1"/>
</dbReference>
<dbReference type="SMART" id="SM00506">
    <property type="entry name" value="A1pp"/>
    <property type="match status" value="1"/>
</dbReference>
<dbReference type="SUPFAM" id="SSF52949">
    <property type="entry name" value="Macro domain-like"/>
    <property type="match status" value="1"/>
</dbReference>
<dbReference type="PROSITE" id="PS51154">
    <property type="entry name" value="MACRO"/>
    <property type="match status" value="1"/>
</dbReference>
<sequence>MTSRLQVIQGDITQLSVDAIVNAANASLMGGGGVDGAIHRAAGPALLDACKLIRQQQGECQTGHAVITPAGKLSAKAVIHTVGPVWRGGEHQEAELLEEAYRSCLLLAEANHFRSIAFPAISTGVYGYPRAQAAEVAVRTVSDFITRYALPEQVYFVCYDEETARLYARLLTQQGDDPA</sequence>